<comment type="subunit">
    <text evidence="3">Interacts with C1QBP; the interaction results in nucleolar localization of C1QBP, probably due to prevention of C1QBP maturation and redirection from mitochondria to nucleoli.</text>
</comment>
<comment type="subcellular location">
    <molecule>POLG alternative reading frame</molecule>
    <subcellularLocation>
        <location evidence="3">Nucleus</location>
        <location evidence="3">Nucleolus</location>
    </subcellularLocation>
</comment>
<comment type="subcellular location">
    <molecule>POLGARF C-terminal fragment</molecule>
    <subcellularLocation>
        <location evidence="3">Secreted</location>
    </subcellularLocation>
</comment>
<comment type="PTM">
    <text evidence="3">Undergoes proteolytic cleavage to produce a secreted C-terminal fragment.</text>
</comment>
<comment type="caution">
    <text evidence="2 3">Encoded by an alternative reading frame in the POLG gene. Translation initiation occurs at a non-canonical CUG codon.</text>
</comment>
<gene>
    <name evidence="7" type="primary">POLGARF</name>
</gene>
<organism evidence="8">
    <name type="scientific">Homo sapiens</name>
    <name type="common">Human</name>
    <dbReference type="NCBI Taxonomy" id="9606"/>
    <lineage>
        <taxon>Eukaryota</taxon>
        <taxon>Metazoa</taxon>
        <taxon>Chordata</taxon>
        <taxon>Craniata</taxon>
        <taxon>Vertebrata</taxon>
        <taxon>Euteleostomi</taxon>
        <taxon>Mammalia</taxon>
        <taxon>Eutheria</taxon>
        <taxon>Euarchontoglires</taxon>
        <taxon>Primates</taxon>
        <taxon>Haplorrhini</taxon>
        <taxon>Catarrhini</taxon>
        <taxon>Hominidae</taxon>
        <taxon>Homo</taxon>
    </lineage>
</organism>
<protein>
    <recommendedName>
        <fullName evidence="5">POLG alternative reading frame</fullName>
        <shortName evidence="5">POLGARF</shortName>
    </recommendedName>
    <alternativeName>
        <fullName evidence="4">ORF-Y</fullName>
    </alternativeName>
    <component>
        <recommendedName>
            <fullName evidence="5">POLGARF C-terminal fragment</fullName>
            <shortName evidence="5">POLGARFin</shortName>
        </recommendedName>
    </component>
</protein>
<reference evidence="8" key="1">
    <citation type="journal article" date="2006" name="Nature">
        <title>Analysis of the DNA sequence and duplication history of human chromosome 15.</title>
        <authorList>
            <person name="Zody M.C."/>
            <person name="Garber M."/>
            <person name="Sharpe T."/>
            <person name="Young S.K."/>
            <person name="Rowen L."/>
            <person name="O'Neill K."/>
            <person name="Whittaker C.A."/>
            <person name="Kamal M."/>
            <person name="Chang J.L."/>
            <person name="Cuomo C.A."/>
            <person name="Dewar K."/>
            <person name="FitzGerald M.G."/>
            <person name="Kodira C.D."/>
            <person name="Madan A."/>
            <person name="Qin S."/>
            <person name="Yang X."/>
            <person name="Abbasi N."/>
            <person name="Abouelleil A."/>
            <person name="Arachchi H.M."/>
            <person name="Baradarani L."/>
            <person name="Birditt B."/>
            <person name="Bloom S."/>
            <person name="Bloom T."/>
            <person name="Borowsky M.L."/>
            <person name="Burke J."/>
            <person name="Butler J."/>
            <person name="Cook A."/>
            <person name="DeArellano K."/>
            <person name="DeCaprio D."/>
            <person name="Dorris L. III"/>
            <person name="Dors M."/>
            <person name="Eichler E.E."/>
            <person name="Engels R."/>
            <person name="Fahey J."/>
            <person name="Fleetwood P."/>
            <person name="Friedman C."/>
            <person name="Gearin G."/>
            <person name="Hall J.L."/>
            <person name="Hensley G."/>
            <person name="Johnson E."/>
            <person name="Jones C."/>
            <person name="Kamat A."/>
            <person name="Kaur A."/>
            <person name="Locke D.P."/>
            <person name="Madan A."/>
            <person name="Munson G."/>
            <person name="Jaffe D.B."/>
            <person name="Lui A."/>
            <person name="Macdonald P."/>
            <person name="Mauceli E."/>
            <person name="Naylor J.W."/>
            <person name="Nesbitt R."/>
            <person name="Nicol R."/>
            <person name="O'Leary S.B."/>
            <person name="Ratcliffe A."/>
            <person name="Rounsley S."/>
            <person name="She X."/>
            <person name="Sneddon K.M.B."/>
            <person name="Stewart S."/>
            <person name="Sougnez C."/>
            <person name="Stone S.M."/>
            <person name="Topham K."/>
            <person name="Vincent D."/>
            <person name="Wang S."/>
            <person name="Zimmer A.R."/>
            <person name="Birren B.W."/>
            <person name="Hood L."/>
            <person name="Lander E.S."/>
            <person name="Nusbaum C."/>
        </authorList>
    </citation>
    <scope>NUCLEOTIDE SEQUENCE [LARGE SCALE GENOMIC DNA]</scope>
</reference>
<reference evidence="6" key="2">
    <citation type="journal article" date="2020" name="Proc. Natl. Acad. Sci. U.S.A.">
        <title>Unusually efficient CUG initiation of an overlapping reading frame in POLG mRNA yields novel protein POLGARF.</title>
        <authorList>
            <person name="Loughran G."/>
            <person name="Zhdanov A.V."/>
            <person name="Mikhaylova M.S."/>
            <person name="Rozov F.N."/>
            <person name="Datskevich P.N."/>
            <person name="Kovalchuk S.I."/>
            <person name="Serebryakova M.V."/>
            <person name="Kiniry S.J."/>
            <person name="Michel A.M."/>
            <person name="O'Connor P.B.F."/>
            <person name="Papkovsky D.B."/>
            <person name="Atkins J.F."/>
            <person name="Baranov P.V."/>
            <person name="Shatsky I.N."/>
            <person name="Andreev D.E."/>
        </authorList>
    </citation>
    <scope>PROTEIN SEQUENCE OF 57-100; 142-150 AND 224-249</scope>
    <scope>INTERACTION WITH C1QBP</scope>
    <scope>SUBCELLULAR LOCATION</scope>
    <scope>PROTEOLYTIC CLEAVAGE</scope>
    <scope>IDENTIFICATION BY MASS SPECTROMETRY</scope>
</reference>
<reference evidence="6" key="3">
    <citation type="journal article" date="2020" name="BMC Genet.">
        <title>Evidence for a novel overlapping coding sequence in POLG initiated at a CUG start codon.</title>
        <authorList>
            <person name="Khan Y.A."/>
            <person name="Jungreis I."/>
            <person name="Wright J.C."/>
            <person name="Mudge J.M."/>
            <person name="Choudhary J.S."/>
            <person name="Firth A.E."/>
            <person name="Kellis M."/>
        </authorList>
    </citation>
    <scope>IDENTIFICATION</scope>
</reference>
<feature type="chain" id="PRO_0000454209" description="POLG alternative reading frame">
    <location>
        <begin position="1"/>
        <end position="260"/>
    </location>
</feature>
<feature type="chain" id="PRO_0000454210" description="POLGARF C-terminal fragment" evidence="3">
    <location>
        <begin status="unknown"/>
        <end position="260"/>
    </location>
</feature>
<feature type="region of interest" description="Disordered" evidence="1">
    <location>
        <begin position="1"/>
        <end position="50"/>
    </location>
</feature>
<feature type="region of interest" description="Required for nucleolar localization" evidence="3">
    <location>
        <begin position="104"/>
        <end position="130"/>
    </location>
</feature>
<feature type="region of interest" description="Disordered" evidence="1">
    <location>
        <begin position="108"/>
        <end position="219"/>
    </location>
</feature>
<feature type="compositionally biased region" description="Low complexity" evidence="1">
    <location>
        <begin position="36"/>
        <end position="48"/>
    </location>
</feature>
<feature type="compositionally biased region" description="Low complexity" evidence="1">
    <location>
        <begin position="116"/>
        <end position="154"/>
    </location>
</feature>
<feature type="compositionally biased region" description="Low complexity" evidence="1">
    <location>
        <begin position="164"/>
        <end position="186"/>
    </location>
</feature>
<feature type="compositionally biased region" description="Gly residues" evidence="1">
    <location>
        <begin position="187"/>
        <end position="199"/>
    </location>
</feature>
<feature type="compositionally biased region" description="Gly residues" evidence="1">
    <location>
        <begin position="209"/>
        <end position="219"/>
    </location>
</feature>
<sequence length="260" mass="25527">MEPKARCSDSQRGGPCTNHEPPALEEGGRRHRRARAGSSSGALGLQLRPRVRPQRRAAAAAAAAAAAAAAATAASAAASAILGGRAAAAQPIGHPDALERAARANLRARRGDAWRGRGAPQRRAPAEARALGAASRALARRGAAPAAPLRGQPGPALPPPGPEAEPALPGGGQLAVAGPAAPEAPGLGLGGGLDPVRPRGGGRTRGHPRGAGPGVRRGGLLGRGNLPHIGGGHIPLGLVFLVQPAAGGRALLLDQPAVAG</sequence>
<name>PLGRF_HUMAN</name>
<dbReference type="EMBL" id="AC124068">
    <property type="status" value="NOT_ANNOTATED_CDS"/>
    <property type="molecule type" value="Genomic_DNA"/>
</dbReference>
<dbReference type="RefSeq" id="NP_001417049.1">
    <property type="nucleotide sequence ID" value="NM_001430120.1"/>
</dbReference>
<dbReference type="FunCoup" id="A0A3B3IS91">
    <property type="interactions" value="2"/>
</dbReference>
<dbReference type="MassIVE" id="A0A3B3IS91"/>
<dbReference type="PeptideAtlas" id="A0A3B3IS91"/>
<dbReference type="Antibodypedia" id="28558">
    <property type="antibodies" value="218 antibodies from 34 providers"/>
</dbReference>
<dbReference type="Ensembl" id="ENST00000706918.1">
    <property type="protein sequence ID" value="ENSP00000516626.1"/>
    <property type="gene ID" value="ENSG00000291307.1"/>
</dbReference>
<dbReference type="GeneID" id="125316803"/>
<dbReference type="MANE-Select" id="ENST00000706918.1">
    <property type="protein sequence ID" value="ENSP00000516626.1"/>
    <property type="RefSeq nucleotide sequence ID" value="NM_001430120.1"/>
    <property type="RefSeq protein sequence ID" value="NP_001417049.1"/>
</dbReference>
<dbReference type="AGR" id="HGNC:56246"/>
<dbReference type="GeneCards" id="POLGARF"/>
<dbReference type="HGNC" id="HGNC:56246">
    <property type="gene designation" value="POLGARF"/>
</dbReference>
<dbReference type="HPA" id="ENSG00000291307">
    <property type="expression patterns" value="Not detected"/>
</dbReference>
<dbReference type="MalaCards" id="POLGARF"/>
<dbReference type="MIM" id="620759">
    <property type="type" value="gene"/>
</dbReference>
<dbReference type="VEuPathDB" id="HostDB:ENSG00000140521"/>
<dbReference type="ChiTaRS" id="POLG">
    <property type="organism name" value="human"/>
</dbReference>
<dbReference type="PRO" id="PR:A0A3B3IS91"/>
<dbReference type="Proteomes" id="UP000005640">
    <property type="component" value="Chromosome 15"/>
</dbReference>
<dbReference type="Bgee" id="ENSG00000140521">
    <property type="expression patterns" value="Expressed in granulocyte and 212 other cell types or tissues"/>
</dbReference>
<dbReference type="ExpressionAtlas" id="A0A3B3IS91">
    <property type="expression patterns" value="baseline and differential"/>
</dbReference>
<dbReference type="GO" id="GO:0005615">
    <property type="term" value="C:extracellular space"/>
    <property type="evidence" value="ECO:0000314"/>
    <property type="project" value="UniProtKB"/>
</dbReference>
<dbReference type="GO" id="GO:0005730">
    <property type="term" value="C:nucleolus"/>
    <property type="evidence" value="ECO:0000314"/>
    <property type="project" value="UniProtKB"/>
</dbReference>
<evidence type="ECO:0000256" key="1">
    <source>
        <dbReference type="SAM" id="MobiDB-lite"/>
    </source>
</evidence>
<evidence type="ECO:0000269" key="2">
    <source>
    </source>
</evidence>
<evidence type="ECO:0000269" key="3">
    <source>
    </source>
</evidence>
<evidence type="ECO:0000303" key="4">
    <source>
    </source>
</evidence>
<evidence type="ECO:0000303" key="5">
    <source>
    </source>
</evidence>
<evidence type="ECO:0000305" key="6"/>
<evidence type="ECO:0000312" key="7">
    <source>
        <dbReference type="HGNC" id="HGNC:56246"/>
    </source>
</evidence>
<evidence type="ECO:0000312" key="8">
    <source>
        <dbReference type="Proteomes" id="UP000005640"/>
    </source>
</evidence>
<proteinExistence type="evidence at protein level"/>
<accession>A0A3B3IS91</accession>
<keyword id="KW-0903">Direct protein sequencing</keyword>
<keyword id="KW-0539">Nucleus</keyword>
<keyword id="KW-1267">Proteomics identification</keyword>
<keyword id="KW-1185">Reference proteome</keyword>
<keyword id="KW-0964">Secreted</keyword>